<evidence type="ECO:0000250" key="1">
    <source>
        <dbReference type="UniProtKB" id="A0A0B0SG80"/>
    </source>
</evidence>
<evidence type="ECO:0000250" key="2">
    <source>
        <dbReference type="UniProtKB" id="B7UP20"/>
    </source>
</evidence>
<evidence type="ECO:0000250" key="3">
    <source>
        <dbReference type="UniProtKB" id="O53604"/>
    </source>
</evidence>
<evidence type="ECO:0000255" key="4">
    <source>
        <dbReference type="PROSITE-ProRule" id="PRU01362"/>
    </source>
</evidence>
<evidence type="ECO:0000269" key="5">
    <source>
    </source>
</evidence>
<evidence type="ECO:0000269" key="6">
    <source>
    </source>
</evidence>
<evidence type="ECO:0000303" key="7">
    <source>
    </source>
</evidence>
<evidence type="ECO:0000305" key="8"/>
<evidence type="ECO:0000305" key="9">
    <source>
    </source>
</evidence>
<evidence type="ECO:0000305" key="10">
    <source>
    </source>
</evidence>
<evidence type="ECO:0000312" key="11">
    <source>
        <dbReference type="EMBL" id="ALJ91409.1"/>
    </source>
</evidence>
<protein>
    <recommendedName>
        <fullName evidence="7">DNA ADP-ribosyl transferase</fullName>
        <shortName evidence="7">DarT</shortName>
        <ecNumber evidence="5 6">2.4.2.-</ecNumber>
    </recommendedName>
    <alternativeName>
        <fullName evidence="7">Toxin DarT</fullName>
    </alternativeName>
</protein>
<organism>
    <name type="scientific">Thermus aquaticus (strain ATCC BAA-2747 / Y51MC23)</name>
    <dbReference type="NCBI Taxonomy" id="498848"/>
    <lineage>
        <taxon>Bacteria</taxon>
        <taxon>Thermotogati</taxon>
        <taxon>Deinococcota</taxon>
        <taxon>Deinococci</taxon>
        <taxon>Thermales</taxon>
        <taxon>Thermaceae</taxon>
        <taxon>Thermus</taxon>
    </lineage>
</organism>
<reference key="1">
    <citation type="journal article" date="2015" name="PLoS ONE">
        <title>Complete Genome Sequence of Thermus aquaticus Y51MC23.</title>
        <authorList>
            <person name="Brumm P.J."/>
            <person name="Monsma S."/>
            <person name="Keough B."/>
            <person name="Jasinovica S."/>
            <person name="Ferguson E."/>
            <person name="Schoenfeld T."/>
            <person name="Lodes M."/>
            <person name="Mead D.A."/>
        </authorList>
    </citation>
    <scope>NUCLEOTIDE SEQUENCE [LARGE SCALE GENOMIC DNA]</scope>
    <source>
        <strain>BAA-2747 / Y51MC23</strain>
    </source>
</reference>
<reference key="2">
    <citation type="journal article" date="2016" name="Mol. Cell">
        <title>The Toxin-Antitoxin System DarTG Catalyzes Reversible ADP-Ribosylation of DNA.</title>
        <authorList>
            <person name="Jankevicius G."/>
            <person name="Ariza A."/>
            <person name="Ahel M."/>
            <person name="Ahel I."/>
        </authorList>
    </citation>
    <scope>FUNCTION AS A TOXIN</scope>
    <scope>FUNCTION AS AN ADP-RIBOSYL TRANSFERASE</scope>
    <scope>SUBSTRATE SPECIFICITY</scope>
    <scope>CATALYTIC ACTIVITY</scope>
    <scope>EXPRESSION IN E.COLI</scope>
    <scope>SUBUNIT</scope>
    <scope>PROBABLE ACTIVE SITE</scope>
    <scope>MUTAGENESIS OF GLU-160</scope>
</reference>
<reference key="3">
    <citation type="journal article" date="2021" name="Nature">
        <title>Molecular basis for DarT ADP-ribosylation of a DNA base.</title>
        <authorList>
            <person name="Schuller M."/>
            <person name="Butler R.E."/>
            <person name="Ariza A."/>
            <person name="Tromans-Coia C."/>
            <person name="Jankevicius G."/>
            <person name="Claridge T.D.W."/>
            <person name="Kendall S.L."/>
            <person name="Goh S."/>
            <person name="Stewart G.R."/>
            <person name="Ahel I."/>
        </authorList>
    </citation>
    <scope>FUNCTION AS A TOXIN</scope>
    <scope>FUNCTION AS AN ADP-RIBOSYL TRANSFERASE</scope>
    <scope>CATALYTIC ACTIVITY</scope>
    <scope>POSSIBLE REACTION MECHANISM</scope>
    <scope>ACTIVE SITE</scope>
    <scope>EXPRESSION IN E.COLI</scope>
    <scope>MUTAGENESIS OF TYR-47; HIS-53; ARG-54; HIS-68; TYR-74; ARG-78; MET-81; TYR-83; HIS-122; ARG-154; GLN-158 AND GLU-160</scope>
</reference>
<comment type="function">
    <text evidence="2 3 5 6">Toxic component of the hybrid type II/IV toxin-antitoxin (TA) system DarTG, which plays a crucial role in controlling bacterial growth and bacteriophage infection (By similarity). Its toxic effect is neutralized by cognate antitoxin DarG (PubMed:34408320). In case of phage infection, DarT toxin ADP-ribosylates DNA, which inhibits both viral DNA and RNA synthesis and leads to abortive infection (By similarity). ADP-ribosylates ssDNA on the second thymidine of the consensus sequence 5'-TNTC-3'; the protein does not auto-modify. Has no activity on dsDNA in vitro. This leads to a decrease in DNA replication. Upon expression in E.coli inhibits cell growth, colony formation and induces the SOS response. Expression leads to bacteriostasis; however if cells grow over an hour in the presence of toxin, growth is no longer restored on antitoxin-inducing plates (PubMed:27939941). In E.coli ADP-ribosylates genomic DNA (gDNA), which induces RecA expression (a marker for DNA damage) (PubMed:34408320).</text>
</comment>
<comment type="catalytic activity">
    <reaction evidence="4">
        <text>a thymidine in DNA + NAD(+) = an N-(ADP-alpha-D-ribosyl)-thymidine in DNA + nicotinamide + H(+)</text>
        <dbReference type="Rhea" id="RHEA:71651"/>
        <dbReference type="Rhea" id="RHEA-COMP:13556"/>
        <dbReference type="Rhea" id="RHEA-COMP:18051"/>
        <dbReference type="ChEBI" id="CHEBI:15378"/>
        <dbReference type="ChEBI" id="CHEBI:17154"/>
        <dbReference type="ChEBI" id="CHEBI:57540"/>
        <dbReference type="ChEBI" id="CHEBI:137386"/>
        <dbReference type="ChEBI" id="CHEBI:191199"/>
    </reaction>
    <physiologicalReaction direction="left-to-right" evidence="4 5 6">
        <dbReference type="Rhea" id="RHEA:71652"/>
    </physiologicalReaction>
</comment>
<comment type="subunit">
    <text evidence="3">Interacts with cognate antitoxin DarG (via C-terminus); this heterodimeric complex neutralizes the toxic effect of DarT by preventing ssDNA binding to DarT and consequently inactivating the toxin by direct protein-protein interactions.</text>
</comment>
<comment type="domain">
    <text evidence="1">The NAD(+)-binding element stabilizes the ADP-ribosylating turn-turn (ARTT) loop which confers substrate specificity; both domains contribute to ssDNA-binding.</text>
</comment>
<comment type="similarity">
    <text evidence="4">Belongs to the DarT ADP-ribosyltransferase family.</text>
</comment>
<comment type="sequence caution" evidence="8">
    <conflict type="erroneous initiation">
        <sequence resource="EMBL-CDS" id="ALJ91409"/>
    </conflict>
    <text>Truncated N-terminus.</text>
</comment>
<sequence length="222" mass="25702">MPQQGLAYPVPTLIYHITHLNNLQGILQRGGLLPYSQRPPTQQNVAYGHIQAHRAQVVVPVGPRGKLHDYVPFYFCPRSPMLYAIHTQQTDYQGDQRPILHLVSSAQKVAEARIPFVFTDRHAAVQYVCFFHKLEHLKALDWQAIQASYWANVREKKQAEFLVKDFFPWELVEEIGVIDKTIQAQVESILAQFPDLHHPPVRVRRSWYYKKRLCSASCEATF</sequence>
<name>DART_THEA5</name>
<dbReference type="EC" id="2.4.2.-" evidence="5 6"/>
<dbReference type="EMBL" id="CP010822">
    <property type="protein sequence ID" value="ALJ91409.1"/>
    <property type="status" value="ALT_INIT"/>
    <property type="molecule type" value="Genomic_DNA"/>
</dbReference>
<dbReference type="RefSeq" id="WP_003046165.1">
    <property type="nucleotide sequence ID" value="NZ_CP010822.1"/>
</dbReference>
<dbReference type="SMR" id="P0DV56"/>
<dbReference type="KEGG" id="taq:TO73_1568"/>
<dbReference type="OrthoDB" id="9813972at2"/>
<dbReference type="GO" id="GO:0003677">
    <property type="term" value="F:DNA binding"/>
    <property type="evidence" value="ECO:0007669"/>
    <property type="project" value="UniProtKB-KW"/>
</dbReference>
<dbReference type="GO" id="GO:0016757">
    <property type="term" value="F:glycosyltransferase activity"/>
    <property type="evidence" value="ECO:0007669"/>
    <property type="project" value="UniProtKB-KW"/>
</dbReference>
<dbReference type="GO" id="GO:0016779">
    <property type="term" value="F:nucleotidyltransferase activity"/>
    <property type="evidence" value="ECO:0007669"/>
    <property type="project" value="UniProtKB-KW"/>
</dbReference>
<dbReference type="InterPro" id="IPR029494">
    <property type="entry name" value="DarT"/>
</dbReference>
<dbReference type="Pfam" id="PF14487">
    <property type="entry name" value="DarT"/>
    <property type="match status" value="1"/>
</dbReference>
<dbReference type="PROSITE" id="PS52018">
    <property type="entry name" value="DART"/>
    <property type="match status" value="1"/>
</dbReference>
<keyword id="KW-0238">DNA-binding</keyword>
<keyword id="KW-0328">Glycosyltransferase</keyword>
<keyword id="KW-0548">Nucleotidyltransferase</keyword>
<keyword id="KW-1277">Toxin-antitoxin system</keyword>
<keyword id="KW-0808">Transferase</keyword>
<accession>P0DV56</accession>
<gene>
    <name evidence="8" type="primary">darT</name>
    <name evidence="11" type="ORF">TO73_1568</name>
</gene>
<proteinExistence type="evidence at protein level"/>
<feature type="chain" id="PRO_0000456051" description="DNA ADP-ribosyl transferase">
    <location>
        <begin position="1"/>
        <end position="222"/>
    </location>
</feature>
<feature type="domain" description="DarT" evidence="4">
    <location>
        <begin position="12"/>
        <end position="209"/>
    </location>
</feature>
<feature type="DNA-binding region" evidence="1">
    <location>
        <begin position="47"/>
        <end position="53"/>
    </location>
</feature>
<feature type="DNA-binding region" evidence="1">
    <location>
        <begin position="78"/>
        <end position="83"/>
    </location>
</feature>
<feature type="DNA-binding region" evidence="1">
    <location>
        <begin position="148"/>
        <end position="151"/>
    </location>
</feature>
<feature type="DNA-binding region" evidence="1">
    <location>
        <begin position="154"/>
        <end position="158"/>
    </location>
</feature>
<feature type="region of interest" description="NAD(+)-binding element" evidence="1">
    <location>
        <begin position="38"/>
        <end position="56"/>
    </location>
</feature>
<feature type="region of interest" description="ADP-ribosylating turn-turn loop" evidence="1">
    <location>
        <begin position="119"/>
        <end position="160"/>
    </location>
</feature>
<feature type="active site" description="Proton acceptor" evidence="4 10">
    <location>
        <position position="54"/>
    </location>
</feature>
<feature type="active site" evidence="4 9 10">
    <location>
        <position position="160"/>
    </location>
</feature>
<feature type="binding site" evidence="4">
    <location>
        <begin position="16"/>
        <end position="18"/>
    </location>
    <ligand>
        <name>NAD(+)</name>
        <dbReference type="ChEBI" id="CHEBI:57540"/>
    </ligand>
</feature>
<feature type="binding site" evidence="4">
    <location>
        <position position="25"/>
    </location>
    <ligand>
        <name>NAD(+)</name>
        <dbReference type="ChEBI" id="CHEBI:57540"/>
    </ligand>
</feature>
<feature type="binding site" evidence="4">
    <location>
        <position position="33"/>
    </location>
    <ligand>
        <name>NAD(+)</name>
        <dbReference type="ChEBI" id="CHEBI:57540"/>
    </ligand>
</feature>
<feature type="binding site" evidence="4">
    <location>
        <position position="54"/>
    </location>
    <ligand>
        <name>NAD(+)</name>
        <dbReference type="ChEBI" id="CHEBI:57540"/>
    </ligand>
</feature>
<feature type="mutagenesis site" description="Still toxic in E.coli, decreased DNA ADP-ribosylation activity." evidence="6">
    <original>Y</original>
    <variation>A</variation>
    <location>
        <position position="47"/>
    </location>
</feature>
<feature type="mutagenesis site" description="Still toxic in E.coli, decreased DNA ADP-ribosylation activity." evidence="6">
    <original>H</original>
    <variation>A</variation>
    <location>
        <position position="53"/>
    </location>
</feature>
<feature type="mutagenesis site" description="No longer toxic in E.coli, no longer ADP-ribosylates ssDNA. No ADP-ribosylation of gDNA in vivo." evidence="6">
    <original>R</original>
    <variation>A</variation>
    <variation>K</variation>
    <location>
        <position position="54"/>
    </location>
</feature>
<feature type="mutagenesis site" description="Still toxic in E.coli, decreased ADP-ribosylation." evidence="6">
    <original>H</original>
    <variation>A</variation>
    <location>
        <position position="68"/>
    </location>
</feature>
<feature type="mutagenesis site" description="Still toxic in E.coli, no longer ADP-ribosylates ssDNA." evidence="6">
    <original>Y</original>
    <variation>A</variation>
    <variation>S</variation>
    <location>
        <position position="74"/>
    </location>
</feature>
<feature type="mutagenesis site" description="Still toxic in E.coli, decreased ADP-ribosylation." evidence="6">
    <original>Y</original>
    <variation>F</variation>
    <location>
        <position position="74"/>
    </location>
</feature>
<feature type="mutagenesis site" description="Still toxic in E.coli, decreased DNA ADP-ribosylation activity." evidence="6">
    <original>R</original>
    <variation>A</variation>
    <location>
        <position position="78"/>
    </location>
</feature>
<feature type="mutagenesis site" description="Still toxic in E.coli, no longer ADP-ribosylates ssDNA." evidence="6">
    <original>M</original>
    <variation>A</variation>
    <location>
        <position position="81"/>
    </location>
</feature>
<feature type="mutagenesis site" description="Still toxic in E.coli, decreased DNA ADP-ribosylation activity." evidence="6">
    <original>Y</original>
    <variation>A</variation>
    <location>
        <position position="83"/>
    </location>
</feature>
<feature type="mutagenesis site" description="No longer toxic in E.coli, no longer ADP-ribosylates ssDNA. No ADP-ribosylation of gDNA in vivo." evidence="6">
    <original>H</original>
    <variation>A</variation>
    <location>
        <position position="122"/>
    </location>
</feature>
<feature type="mutagenesis site" description="Still toxic in E.coli, decreased ADP-ribosylation." evidence="6">
    <original>H</original>
    <variation>N</variation>
    <location>
        <position position="122"/>
    </location>
</feature>
<feature type="mutagenesis site" description="Still toxic in E.coli, decreased DNA ADP-ribosylation activity." evidence="6">
    <original>R</original>
    <variation>A</variation>
    <location>
        <position position="154"/>
    </location>
</feature>
<feature type="mutagenesis site" description="No longer toxic in E.coli, no longer ADP-ribosylates ssDNA. No ADP-ribosylation of gDNA in vivo." evidence="6">
    <original>R</original>
    <variation>W</variation>
    <location>
        <position position="154"/>
    </location>
</feature>
<feature type="mutagenesis site" description="Still toxic in vivo, decreased DNA ADP-ribosylation activity." evidence="6">
    <original>Q</original>
    <variation>A</variation>
    <location>
        <position position="158"/>
    </location>
</feature>
<feature type="mutagenesis site" description="No longer toxic when expressed in E.coli, no longer ADP-ribosylates ssDNA, no effect on DNA replication. No ADP-ribosylation of gDNA in vivo. Very low activity at low DNA, high protein levels and after 24 hours." evidence="5 6">
    <original>E</original>
    <variation>A</variation>
    <location>
        <position position="160"/>
    </location>
</feature>
<feature type="mutagenesis site" description="No longer toxic in E.coli, no longer ADP-ribosylates ssDNA." evidence="6">
    <original>E</original>
    <variation>D</variation>
    <variation>Q</variation>
    <location>
        <position position="160"/>
    </location>
</feature>